<dbReference type="EMBL" id="AC007354">
    <property type="status" value="NOT_ANNOTATED_CDS"/>
    <property type="molecule type" value="Genomic_DNA"/>
</dbReference>
<dbReference type="EMBL" id="AC009398">
    <property type="status" value="NOT_ANNOTATED_CDS"/>
    <property type="molecule type" value="Genomic_DNA"/>
</dbReference>
<dbReference type="EMBL" id="CP002684">
    <property type="protein sequence ID" value="ANM60061.1"/>
    <property type="molecule type" value="Genomic_DNA"/>
</dbReference>
<dbReference type="RefSeq" id="NP_001322373.1">
    <property type="nucleotide sequence ID" value="NM_001331924.1"/>
</dbReference>
<dbReference type="SMR" id="P0DKH1"/>
<dbReference type="EnsemblPlants" id="AT1G10715.1">
    <property type="protein sequence ID" value="AT1G10715.1"/>
    <property type="gene ID" value="AT1G10715"/>
</dbReference>
<dbReference type="GeneID" id="28717230"/>
<dbReference type="Gramene" id="AT1G10715.1">
    <property type="protein sequence ID" value="AT1G10715.1"/>
    <property type="gene ID" value="AT1G10715"/>
</dbReference>
<dbReference type="KEGG" id="ath:AT1G10715"/>
<dbReference type="Araport" id="AT1G10715"/>
<dbReference type="TAIR" id="AT1G10715"/>
<dbReference type="InParanoid" id="P0DKH1"/>
<dbReference type="PRO" id="PR:P0DKH1"/>
<dbReference type="Proteomes" id="UP000006548">
    <property type="component" value="Chromosome 1"/>
</dbReference>
<dbReference type="ExpressionAtlas" id="P0DKH1">
    <property type="expression patterns" value="baseline"/>
</dbReference>
<dbReference type="GO" id="GO:0010098">
    <property type="term" value="P:suspensor development"/>
    <property type="evidence" value="ECO:0007669"/>
    <property type="project" value="InterPro"/>
</dbReference>
<dbReference type="InterPro" id="IPR041608">
    <property type="entry name" value="ESF1_brassicaceae"/>
</dbReference>
<dbReference type="Pfam" id="PF18209">
    <property type="entry name" value="ESF1"/>
    <property type="match status" value="1"/>
</dbReference>
<gene>
    <name type="primary">ESFL2</name>
    <name type="ordered locus">At1g10715</name>
    <name type="ORF">F20B24</name>
    <name type="ORF">T16B5</name>
</gene>
<accession>P0DKH1</accession>
<proteinExistence type="inferred from homology"/>
<keyword id="KW-1015">Disulfide bond</keyword>
<keyword id="KW-1185">Reference proteome</keyword>
<keyword id="KW-0732">Signal</keyword>
<name>ESFL2_ARATH</name>
<evidence type="ECO:0000250" key="1"/>
<evidence type="ECO:0000255" key="2"/>
<evidence type="ECO:0000305" key="3"/>
<protein>
    <recommendedName>
        <fullName>EMBRYO SURROUNDING FACTOR 1-like protein 2</fullName>
    </recommendedName>
</protein>
<reference key="1">
    <citation type="journal article" date="2000" name="Nature">
        <title>Sequence and analysis of chromosome 1 of the plant Arabidopsis thaliana.</title>
        <authorList>
            <person name="Theologis A."/>
            <person name="Ecker J.R."/>
            <person name="Palm C.J."/>
            <person name="Federspiel N.A."/>
            <person name="Kaul S."/>
            <person name="White O."/>
            <person name="Alonso J."/>
            <person name="Altafi H."/>
            <person name="Araujo R."/>
            <person name="Bowman C.L."/>
            <person name="Brooks S.Y."/>
            <person name="Buehler E."/>
            <person name="Chan A."/>
            <person name="Chao Q."/>
            <person name="Chen H."/>
            <person name="Cheuk R.F."/>
            <person name="Chin C.W."/>
            <person name="Chung M.K."/>
            <person name="Conn L."/>
            <person name="Conway A.B."/>
            <person name="Conway A.R."/>
            <person name="Creasy T.H."/>
            <person name="Dewar K."/>
            <person name="Dunn P."/>
            <person name="Etgu P."/>
            <person name="Feldblyum T.V."/>
            <person name="Feng J.-D."/>
            <person name="Fong B."/>
            <person name="Fujii C.Y."/>
            <person name="Gill J.E."/>
            <person name="Goldsmith A.D."/>
            <person name="Haas B."/>
            <person name="Hansen N.F."/>
            <person name="Hughes B."/>
            <person name="Huizar L."/>
            <person name="Hunter J.L."/>
            <person name="Jenkins J."/>
            <person name="Johnson-Hopson C."/>
            <person name="Khan S."/>
            <person name="Khaykin E."/>
            <person name="Kim C.J."/>
            <person name="Koo H.L."/>
            <person name="Kremenetskaia I."/>
            <person name="Kurtz D.B."/>
            <person name="Kwan A."/>
            <person name="Lam B."/>
            <person name="Langin-Hooper S."/>
            <person name="Lee A."/>
            <person name="Lee J.M."/>
            <person name="Lenz C.A."/>
            <person name="Li J.H."/>
            <person name="Li Y.-P."/>
            <person name="Lin X."/>
            <person name="Liu S.X."/>
            <person name="Liu Z.A."/>
            <person name="Luros J.S."/>
            <person name="Maiti R."/>
            <person name="Marziali A."/>
            <person name="Militscher J."/>
            <person name="Miranda M."/>
            <person name="Nguyen M."/>
            <person name="Nierman W.C."/>
            <person name="Osborne B.I."/>
            <person name="Pai G."/>
            <person name="Peterson J."/>
            <person name="Pham P.K."/>
            <person name="Rizzo M."/>
            <person name="Rooney T."/>
            <person name="Rowley D."/>
            <person name="Sakano H."/>
            <person name="Salzberg S.L."/>
            <person name="Schwartz J.R."/>
            <person name="Shinn P."/>
            <person name="Southwick A.M."/>
            <person name="Sun H."/>
            <person name="Tallon L.J."/>
            <person name="Tambunga G."/>
            <person name="Toriumi M.J."/>
            <person name="Town C.D."/>
            <person name="Utterback T."/>
            <person name="Van Aken S."/>
            <person name="Vaysberg M."/>
            <person name="Vysotskaia V.S."/>
            <person name="Walker M."/>
            <person name="Wu D."/>
            <person name="Yu G."/>
            <person name="Fraser C.M."/>
            <person name="Venter J.C."/>
            <person name="Davis R.W."/>
        </authorList>
    </citation>
    <scope>NUCLEOTIDE SEQUENCE [LARGE SCALE GENOMIC DNA]</scope>
    <source>
        <strain>cv. Columbia</strain>
    </source>
</reference>
<reference key="2">
    <citation type="journal article" date="2017" name="Plant J.">
        <title>Araport11: a complete reannotation of the Arabidopsis thaliana reference genome.</title>
        <authorList>
            <person name="Cheng C.Y."/>
            <person name="Krishnakumar V."/>
            <person name="Chan A.P."/>
            <person name="Thibaud-Nissen F."/>
            <person name="Schobel S."/>
            <person name="Town C.D."/>
        </authorList>
    </citation>
    <scope>GENOME REANNOTATION</scope>
    <source>
        <strain>cv. Columbia</strain>
    </source>
</reference>
<reference key="3">
    <citation type="journal article" date="2014" name="Science">
        <title>Central cell-derived peptides regulate early embryo patterning in flowering plants.</title>
        <authorList>
            <person name="Costa L.M."/>
            <person name="Marshall E."/>
            <person name="Tesfaye M."/>
            <person name="Silverstein K.A."/>
            <person name="Mori M."/>
            <person name="Umetsu Y."/>
            <person name="Otterbach S.L."/>
            <person name="Papareddy R."/>
            <person name="Dickinson H.G."/>
            <person name="Boutiller K."/>
            <person name="VandenBosch K.A."/>
            <person name="Ohki S."/>
            <person name="Gutierrez-Marcos J.F."/>
        </authorList>
    </citation>
    <scope>IDENTIFICATION</scope>
</reference>
<feature type="signal peptide" evidence="2">
    <location>
        <begin position="1"/>
        <end position="21"/>
    </location>
</feature>
<feature type="chain" id="PRO_0000430063" description="EMBRYO SURROUNDING FACTOR 1-like protein 2">
    <location>
        <begin position="22"/>
        <end position="86"/>
    </location>
</feature>
<feature type="disulfide bond" evidence="1">
    <location>
        <begin position="39"/>
        <end position="54"/>
    </location>
</feature>
<feature type="disulfide bond" evidence="1">
    <location>
        <begin position="44"/>
        <end position="82"/>
    </location>
</feature>
<feature type="disulfide bond" evidence="1">
    <location>
        <begin position="52"/>
        <end position="78"/>
    </location>
</feature>
<feature type="disulfide bond" evidence="1">
    <location>
        <begin position="55"/>
        <end position="65"/>
    </location>
</feature>
<sequence length="86" mass="10027">MKSHIAIICIIMLSFFSMHEYRCVGSTIGRSSKIYIPLCFHNNCIHPFKDDCWCCLAAGTKKDWCWLEKDFPDAKELCMKTCTRKI</sequence>
<comment type="similarity">
    <text evidence="3">Belongs to the MEG family.</text>
</comment>
<organism>
    <name type="scientific">Arabidopsis thaliana</name>
    <name type="common">Mouse-ear cress</name>
    <dbReference type="NCBI Taxonomy" id="3702"/>
    <lineage>
        <taxon>Eukaryota</taxon>
        <taxon>Viridiplantae</taxon>
        <taxon>Streptophyta</taxon>
        <taxon>Embryophyta</taxon>
        <taxon>Tracheophyta</taxon>
        <taxon>Spermatophyta</taxon>
        <taxon>Magnoliopsida</taxon>
        <taxon>eudicotyledons</taxon>
        <taxon>Gunneridae</taxon>
        <taxon>Pentapetalae</taxon>
        <taxon>rosids</taxon>
        <taxon>malvids</taxon>
        <taxon>Brassicales</taxon>
        <taxon>Brassicaceae</taxon>
        <taxon>Camelineae</taxon>
        <taxon>Arabidopsis</taxon>
    </lineage>
</organism>